<accession>A8XND8</accession>
<comment type="function">
    <text evidence="2">Binds to RNA with repeat sequences CUG and CCUG.</text>
</comment>
<comment type="subcellular location">
    <subcellularLocation>
        <location evidence="1">Nucleus</location>
    </subcellularLocation>
</comment>
<comment type="similarity">
    <text evidence="3">Belongs to the muscleblind family.</text>
</comment>
<keyword id="KW-0479">Metal-binding</keyword>
<keyword id="KW-0539">Nucleus</keyword>
<keyword id="KW-1185">Reference proteome</keyword>
<keyword id="KW-0677">Repeat</keyword>
<keyword id="KW-0694">RNA-binding</keyword>
<keyword id="KW-0862">Zinc</keyword>
<keyword id="KW-0863">Zinc-finger</keyword>
<feature type="chain" id="PRO_0000395432" description="Muscleblind-like protein">
    <location>
        <begin position="1"/>
        <end position="299"/>
    </location>
</feature>
<feature type="zinc finger region" description="C3H1-type 1" evidence="4">
    <location>
        <begin position="38"/>
        <end position="66"/>
    </location>
</feature>
<feature type="zinc finger region" description="C3H1-type 2" evidence="4">
    <location>
        <begin position="72"/>
        <end position="100"/>
    </location>
</feature>
<organism>
    <name type="scientific">Caenorhabditis briggsae</name>
    <dbReference type="NCBI Taxonomy" id="6238"/>
    <lineage>
        <taxon>Eukaryota</taxon>
        <taxon>Metazoa</taxon>
        <taxon>Ecdysozoa</taxon>
        <taxon>Nematoda</taxon>
        <taxon>Chromadorea</taxon>
        <taxon>Rhabditida</taxon>
        <taxon>Rhabditina</taxon>
        <taxon>Rhabditomorpha</taxon>
        <taxon>Rhabditoidea</taxon>
        <taxon>Rhabditidae</taxon>
        <taxon>Peloderinae</taxon>
        <taxon>Caenorhabditis</taxon>
    </lineage>
</organism>
<reference evidence="5" key="1">
    <citation type="journal article" date="2003" name="PLoS Biol.">
        <title>The genome sequence of Caenorhabditis briggsae: a platform for comparative genomics.</title>
        <authorList>
            <person name="Stein L.D."/>
            <person name="Bao Z."/>
            <person name="Blasiar D."/>
            <person name="Blumenthal T."/>
            <person name="Brent M.R."/>
            <person name="Chen N."/>
            <person name="Chinwalla A."/>
            <person name="Clarke L."/>
            <person name="Clee C."/>
            <person name="Coghlan A."/>
            <person name="Coulson A."/>
            <person name="D'Eustachio P."/>
            <person name="Fitch D.H.A."/>
            <person name="Fulton L.A."/>
            <person name="Fulton R.E."/>
            <person name="Griffiths-Jones S."/>
            <person name="Harris T.W."/>
            <person name="Hillier L.W."/>
            <person name="Kamath R."/>
            <person name="Kuwabara P.E."/>
            <person name="Mardis E.R."/>
            <person name="Marra M.A."/>
            <person name="Miner T.L."/>
            <person name="Minx P."/>
            <person name="Mullikin J.C."/>
            <person name="Plumb R.W."/>
            <person name="Rogers J."/>
            <person name="Schein J.E."/>
            <person name="Sohrmann M."/>
            <person name="Spieth J."/>
            <person name="Stajich J.E."/>
            <person name="Wei C."/>
            <person name="Willey D."/>
            <person name="Wilson R.K."/>
            <person name="Durbin R.M."/>
            <person name="Waterston R.H."/>
        </authorList>
    </citation>
    <scope>NUCLEOTIDE SEQUENCE [LARGE SCALE GENOMIC DNA]</scope>
    <source>
        <strain>AF16</strain>
    </source>
</reference>
<name>MBL_CAEBR</name>
<dbReference type="EMBL" id="HE600995">
    <property type="protein sequence ID" value="CAP34369.2"/>
    <property type="molecule type" value="Genomic_DNA"/>
</dbReference>
<dbReference type="SMR" id="A8XND8"/>
<dbReference type="FunCoup" id="A8XND8">
    <property type="interactions" value="129"/>
</dbReference>
<dbReference type="STRING" id="6238.A8XND8"/>
<dbReference type="WormBase" id="CBG15968a">
    <property type="protein sequence ID" value="CBP40670"/>
    <property type="gene ID" value="WBGene00036057"/>
    <property type="gene designation" value="Cbr-mbl-1"/>
</dbReference>
<dbReference type="eggNOG" id="KOG2494">
    <property type="taxonomic scope" value="Eukaryota"/>
</dbReference>
<dbReference type="HOGENOM" id="CLU_053536_2_0_1"/>
<dbReference type="InParanoid" id="A8XND8"/>
<dbReference type="OMA" id="CEYMQPP"/>
<dbReference type="Proteomes" id="UP000008549">
    <property type="component" value="Unassembled WGS sequence"/>
</dbReference>
<dbReference type="GO" id="GO:0005737">
    <property type="term" value="C:cytoplasm"/>
    <property type="evidence" value="ECO:0000318"/>
    <property type="project" value="GO_Central"/>
</dbReference>
<dbReference type="GO" id="GO:0005654">
    <property type="term" value="C:nucleoplasm"/>
    <property type="evidence" value="ECO:0000318"/>
    <property type="project" value="GO_Central"/>
</dbReference>
<dbReference type="GO" id="GO:0003723">
    <property type="term" value="F:RNA binding"/>
    <property type="evidence" value="ECO:0000318"/>
    <property type="project" value="GO_Central"/>
</dbReference>
<dbReference type="GO" id="GO:0008270">
    <property type="term" value="F:zinc ion binding"/>
    <property type="evidence" value="ECO:0007669"/>
    <property type="project" value="UniProtKB-KW"/>
</dbReference>
<dbReference type="GO" id="GO:0043484">
    <property type="term" value="P:regulation of RNA splicing"/>
    <property type="evidence" value="ECO:0000318"/>
    <property type="project" value="GO_Central"/>
</dbReference>
<dbReference type="FunFam" id="3.30.1370.210:FF:000005">
    <property type="entry name" value="Muscleblind, isoform M"/>
    <property type="match status" value="1"/>
</dbReference>
<dbReference type="Gene3D" id="3.30.1370.210">
    <property type="match status" value="1"/>
</dbReference>
<dbReference type="InterPro" id="IPR054429">
    <property type="entry name" value="Znf-CCCH_Muscleblind-like"/>
</dbReference>
<dbReference type="InterPro" id="IPR000571">
    <property type="entry name" value="Znf_CCCH"/>
</dbReference>
<dbReference type="PANTHER" id="PTHR12675">
    <property type="entry name" value="MUSCLEBLIND-LIKE PROTEIN"/>
    <property type="match status" value="1"/>
</dbReference>
<dbReference type="PANTHER" id="PTHR12675:SF12">
    <property type="entry name" value="PROTEIN MUSCLEBLIND"/>
    <property type="match status" value="1"/>
</dbReference>
<dbReference type="Pfam" id="PF22628">
    <property type="entry name" value="zf-CCCH_10"/>
    <property type="match status" value="2"/>
</dbReference>
<dbReference type="SMART" id="SM00356">
    <property type="entry name" value="ZnF_C3H1"/>
    <property type="match status" value="2"/>
</dbReference>
<dbReference type="PROSITE" id="PS50103">
    <property type="entry name" value="ZF_C3H1"/>
    <property type="match status" value="2"/>
</dbReference>
<proteinExistence type="inferred from homology"/>
<evidence type="ECO:0000250" key="1">
    <source>
        <dbReference type="UniProtKB" id="O16011"/>
    </source>
</evidence>
<evidence type="ECO:0000250" key="2">
    <source>
        <dbReference type="UniProtKB" id="Q94250"/>
    </source>
</evidence>
<evidence type="ECO:0000255" key="3"/>
<evidence type="ECO:0000255" key="4">
    <source>
        <dbReference type="PROSITE-ProRule" id="PRU00723"/>
    </source>
</evidence>
<evidence type="ECO:0000312" key="5">
    <source>
        <dbReference type="EMBL" id="CAP34369.2"/>
    </source>
</evidence>
<sequence>MFDENSNAAGTTPVASSLAATPNANLMSQVFNVKDSRWLQVEVCREFLRGQCARSDQECKFAHPPPNVDVQQGRVTACYDSIKGRCTRENPKCKYLHPPQHIKDQLLINGRNHLALKNLLSAQINQGGNQMINPMLALQQQAAAVNLLPNTQMYPQYYNGMMYQQVLPDPYAAAAQQLQTAALLGNVGGLLSAQSAAAALVANSSTQPPTPSPLLRLQRKRALEEDTSNGNDRTAAAHTQLLSLAAGAVPVKRPALDKNGAMLFSPAAPQTPQFNPYLLQTLQGYVPTVSCEYMQPPPF</sequence>
<gene>
    <name evidence="5" type="primary">mbl-1</name>
    <name type="ORF">CBG15968</name>
</gene>
<protein>
    <recommendedName>
        <fullName evidence="2">Muscleblind-like protein</fullName>
    </recommendedName>
</protein>